<name>RS20_ALBFT</name>
<proteinExistence type="inferred from homology"/>
<protein>
    <recommendedName>
        <fullName evidence="1">Small ribosomal subunit protein bS20</fullName>
    </recommendedName>
    <alternativeName>
        <fullName evidence="3">30S ribosomal protein S20</fullName>
    </alternativeName>
</protein>
<reference key="1">
    <citation type="submission" date="2006-02" db="EMBL/GenBank/DDBJ databases">
        <title>Complete sequence of chromosome of Rhodoferax ferrireducens DSM 15236.</title>
        <authorList>
            <person name="Copeland A."/>
            <person name="Lucas S."/>
            <person name="Lapidus A."/>
            <person name="Barry K."/>
            <person name="Detter J.C."/>
            <person name="Glavina del Rio T."/>
            <person name="Hammon N."/>
            <person name="Israni S."/>
            <person name="Pitluck S."/>
            <person name="Brettin T."/>
            <person name="Bruce D."/>
            <person name="Han C."/>
            <person name="Tapia R."/>
            <person name="Gilna P."/>
            <person name="Kiss H."/>
            <person name="Schmutz J."/>
            <person name="Larimer F."/>
            <person name="Land M."/>
            <person name="Kyrpides N."/>
            <person name="Ivanova N."/>
            <person name="Richardson P."/>
        </authorList>
    </citation>
    <scope>NUCLEOTIDE SEQUENCE [LARGE SCALE GENOMIC DNA]</scope>
    <source>
        <strain>ATCC BAA-621 / DSM 15236 / T118</strain>
    </source>
</reference>
<comment type="function">
    <text evidence="1">Binds directly to 16S ribosomal RNA.</text>
</comment>
<comment type="similarity">
    <text evidence="1">Belongs to the bacterial ribosomal protein bS20 family.</text>
</comment>
<sequence length="100" mass="10790">MASGKPKKKNPRLASGRKRVRQDVKINAANTSLRSKYRTAVKNVEKAVVAGDKAKATELFAKMQAVVDTVADKGIFHKNKAARDKSRLSTKVKALAAIAA</sequence>
<keyword id="KW-1185">Reference proteome</keyword>
<keyword id="KW-0687">Ribonucleoprotein</keyword>
<keyword id="KW-0689">Ribosomal protein</keyword>
<keyword id="KW-0694">RNA-binding</keyword>
<keyword id="KW-0699">rRNA-binding</keyword>
<feature type="chain" id="PRO_0000260136" description="Small ribosomal subunit protein bS20">
    <location>
        <begin position="1"/>
        <end position="100"/>
    </location>
</feature>
<feature type="region of interest" description="Disordered" evidence="2">
    <location>
        <begin position="1"/>
        <end position="21"/>
    </location>
</feature>
<feature type="compositionally biased region" description="Basic residues" evidence="2">
    <location>
        <begin position="1"/>
        <end position="20"/>
    </location>
</feature>
<accession>Q21WK7</accession>
<evidence type="ECO:0000255" key="1">
    <source>
        <dbReference type="HAMAP-Rule" id="MF_00500"/>
    </source>
</evidence>
<evidence type="ECO:0000256" key="2">
    <source>
        <dbReference type="SAM" id="MobiDB-lite"/>
    </source>
</evidence>
<evidence type="ECO:0000305" key="3"/>
<dbReference type="EMBL" id="CP000267">
    <property type="protein sequence ID" value="ABD69846.1"/>
    <property type="molecule type" value="Genomic_DNA"/>
</dbReference>
<dbReference type="RefSeq" id="WP_011464414.1">
    <property type="nucleotide sequence ID" value="NC_007908.1"/>
</dbReference>
<dbReference type="SMR" id="Q21WK7"/>
<dbReference type="STRING" id="338969.Rfer_2122"/>
<dbReference type="KEGG" id="rfr:Rfer_2122"/>
<dbReference type="eggNOG" id="COG0268">
    <property type="taxonomic scope" value="Bacteria"/>
</dbReference>
<dbReference type="HOGENOM" id="CLU_160655_4_0_4"/>
<dbReference type="OrthoDB" id="9807974at2"/>
<dbReference type="Proteomes" id="UP000008332">
    <property type="component" value="Chromosome"/>
</dbReference>
<dbReference type="GO" id="GO:0005829">
    <property type="term" value="C:cytosol"/>
    <property type="evidence" value="ECO:0007669"/>
    <property type="project" value="TreeGrafter"/>
</dbReference>
<dbReference type="GO" id="GO:0015935">
    <property type="term" value="C:small ribosomal subunit"/>
    <property type="evidence" value="ECO:0007669"/>
    <property type="project" value="TreeGrafter"/>
</dbReference>
<dbReference type="GO" id="GO:0070181">
    <property type="term" value="F:small ribosomal subunit rRNA binding"/>
    <property type="evidence" value="ECO:0007669"/>
    <property type="project" value="TreeGrafter"/>
</dbReference>
<dbReference type="GO" id="GO:0003735">
    <property type="term" value="F:structural constituent of ribosome"/>
    <property type="evidence" value="ECO:0007669"/>
    <property type="project" value="InterPro"/>
</dbReference>
<dbReference type="GO" id="GO:0006412">
    <property type="term" value="P:translation"/>
    <property type="evidence" value="ECO:0007669"/>
    <property type="project" value="UniProtKB-UniRule"/>
</dbReference>
<dbReference type="FunFam" id="1.20.58.110:FF:000001">
    <property type="entry name" value="30S ribosomal protein S20"/>
    <property type="match status" value="1"/>
</dbReference>
<dbReference type="Gene3D" id="1.20.58.110">
    <property type="entry name" value="Ribosomal protein S20"/>
    <property type="match status" value="1"/>
</dbReference>
<dbReference type="HAMAP" id="MF_00500">
    <property type="entry name" value="Ribosomal_bS20"/>
    <property type="match status" value="1"/>
</dbReference>
<dbReference type="InterPro" id="IPR002583">
    <property type="entry name" value="Ribosomal_bS20"/>
</dbReference>
<dbReference type="InterPro" id="IPR036510">
    <property type="entry name" value="Ribosomal_bS20_sf"/>
</dbReference>
<dbReference type="NCBIfam" id="TIGR00029">
    <property type="entry name" value="S20"/>
    <property type="match status" value="1"/>
</dbReference>
<dbReference type="PANTHER" id="PTHR33398">
    <property type="entry name" value="30S RIBOSOMAL PROTEIN S20"/>
    <property type="match status" value="1"/>
</dbReference>
<dbReference type="PANTHER" id="PTHR33398:SF1">
    <property type="entry name" value="SMALL RIBOSOMAL SUBUNIT PROTEIN BS20C"/>
    <property type="match status" value="1"/>
</dbReference>
<dbReference type="Pfam" id="PF01649">
    <property type="entry name" value="Ribosomal_S20p"/>
    <property type="match status" value="1"/>
</dbReference>
<dbReference type="SUPFAM" id="SSF46992">
    <property type="entry name" value="Ribosomal protein S20"/>
    <property type="match status" value="1"/>
</dbReference>
<organism>
    <name type="scientific">Albidiferax ferrireducens (strain ATCC BAA-621 / DSM 15236 / T118)</name>
    <name type="common">Rhodoferax ferrireducens</name>
    <dbReference type="NCBI Taxonomy" id="338969"/>
    <lineage>
        <taxon>Bacteria</taxon>
        <taxon>Pseudomonadati</taxon>
        <taxon>Pseudomonadota</taxon>
        <taxon>Betaproteobacteria</taxon>
        <taxon>Burkholderiales</taxon>
        <taxon>Comamonadaceae</taxon>
        <taxon>Rhodoferax</taxon>
    </lineage>
</organism>
<gene>
    <name evidence="1" type="primary">rpsT</name>
    <name type="ordered locus">Rfer_2122</name>
</gene>